<feature type="signal peptide" evidence="1 2">
    <location>
        <begin position="1"/>
        <end position="22"/>
    </location>
</feature>
<feature type="chain" id="PRO_0000000908" description="Adipokinetic prohormone type 2">
    <location>
        <begin position="23"/>
        <end position="61"/>
    </location>
</feature>
<feature type="peptide" id="PRO_0000000909" description="Adipokinetic hormone 2">
    <location>
        <begin position="23"/>
        <end position="30"/>
    </location>
</feature>
<feature type="peptide" id="PRO_0000000910" description="Adipokinetic hormone precursor-related peptide beta chain">
    <location>
        <begin position="34"/>
        <end position="61"/>
    </location>
</feature>
<feature type="modified residue" description="Pyrrolidone carboxylic acid" evidence="2">
    <location>
        <position position="23"/>
    </location>
</feature>
<feature type="modified residue" description="Tryptophan amide" evidence="2">
    <location>
        <position position="30"/>
    </location>
</feature>
<feature type="disulfide bond" description="Interchain">
    <location>
        <position position="59"/>
    </location>
</feature>
<dbReference type="EMBL" id="X86800">
    <property type="protein sequence ID" value="CAA60495.1"/>
    <property type="molecule type" value="mRNA"/>
</dbReference>
<dbReference type="PIR" id="B58652">
    <property type="entry name" value="AKLQL2"/>
</dbReference>
<dbReference type="GO" id="GO:0005576">
    <property type="term" value="C:extracellular region"/>
    <property type="evidence" value="ECO:0007669"/>
    <property type="project" value="UniProtKB-SubCell"/>
</dbReference>
<dbReference type="GO" id="GO:0005179">
    <property type="term" value="F:hormone activity"/>
    <property type="evidence" value="ECO:0007669"/>
    <property type="project" value="UniProtKB-KW"/>
</dbReference>
<dbReference type="GO" id="GO:0007629">
    <property type="term" value="P:flight behavior"/>
    <property type="evidence" value="ECO:0007669"/>
    <property type="project" value="UniProtKB-KW"/>
</dbReference>
<dbReference type="GO" id="GO:0007218">
    <property type="term" value="P:neuropeptide signaling pathway"/>
    <property type="evidence" value="ECO:0007669"/>
    <property type="project" value="UniProtKB-KW"/>
</dbReference>
<dbReference type="InterPro" id="IPR002047">
    <property type="entry name" value="Adipokinetic_hormone_CS"/>
</dbReference>
<dbReference type="PROSITE" id="PS00256">
    <property type="entry name" value="AKH"/>
    <property type="match status" value="1"/>
</dbReference>
<accession>P08379</accession>
<accession>P10617</accession>
<protein>
    <recommendedName>
        <fullName>Adipokinetic prohormone type 2</fullName>
    </recommendedName>
    <component>
        <recommendedName>
            <fullName>Adipokinetic hormone 2</fullName>
        </recommendedName>
        <alternativeName>
            <fullName>Adipokinetic hormone II</fullName>
            <shortName>AKH-II</shortName>
        </alternativeName>
    </component>
    <component>
        <recommendedName>
            <fullName>Adipokinetic hormone precursor-related peptide beta chain</fullName>
            <shortName>APRP-beta</shortName>
        </recommendedName>
        <alternativeName>
            <fullName>6 kDa dimeric peptide B</fullName>
        </alternativeName>
    </component>
</protein>
<comment type="function">
    <text>This hormone, released from cells in the corpora cardiaca, causes release of diglycerides from the fat body and stimulation of muscles to use these diglycerides as an energy source during energy-demanding processes.</text>
</comment>
<comment type="subunit">
    <text>Adipokinetic hormone precursor-related peptide (APRP) can form three type of disulfide-bond dimers: p1 (alpha-alpha), p2 (alpha-beta), and p3 (beta-beta).</text>
</comment>
<comment type="subcellular location">
    <subcellularLocation>
        <location>Secreted</location>
    </subcellularLocation>
</comment>
<comment type="similarity">
    <text evidence="3">Belongs to the AKH/HRTH/RPCH family.</text>
</comment>
<reference key="1">
    <citation type="journal article" date="1995" name="J. Biol. Chem.">
        <title>Molecular cloning of three distinct cDNAs, each encoding a different adipokinetic hormone precursor, of the migratory locust, Locusta migratoria. Differential expression of the distinct adipokinetic hormone precursor genes during flight activity.</title>
        <authorList>
            <person name="Bogerd J."/>
            <person name="Kooiman F.P."/>
            <person name="Pijnenburg M.A.P."/>
            <person name="Hekking L.H."/>
            <person name="Oudejans R.C."/>
            <person name="Vander Horst D.J."/>
        </authorList>
    </citation>
    <scope>NUCLEOTIDE SEQUENCE [MRNA]</scope>
    <source>
        <tissue>Corpora cardiaca</tissue>
    </source>
</reference>
<reference key="2">
    <citation type="journal article" date="1985" name="Biol. Chem. Hoppe-Seyler">
        <title>Primary structures of locust adipokinetic hormones II.</title>
        <authorList>
            <person name="Siegert K."/>
            <person name="Morgan P."/>
            <person name="Mordue W."/>
        </authorList>
    </citation>
    <scope>PROTEIN SEQUENCE OF 23-30</scope>
    <scope>PYROGLUTAMATE FORMATION AT GLN-23</scope>
    <scope>AMIDATION AT TRP-30</scope>
</reference>
<reference key="3">
    <citation type="journal article" date="1986" name="Biochem. Biophys. Res. Commun.">
        <title>Sequence analyses of adipokinetic hormones II from corpora cardiaca of Schistocerca nitans, Schistocerca gregaria, and Locusta migratoria by fast atom bombardment mass spectrometry.</title>
        <authorList>
            <person name="Gaede G."/>
            <person name="Goldsworthy G.J."/>
            <person name="Schaffer M.H."/>
            <person name="Cook J.C."/>
            <person name="Rinehart K.L. Jr."/>
        </authorList>
    </citation>
    <scope>PROTEIN SEQUENCE OF 23-30</scope>
</reference>
<reference key="4">
    <citation type="journal article" date="1989" name="Eur. J. Biochem.">
        <title>Isolation and structure of two novel 6-kDa dimeric peptides from the corpora cardiaca of the insect Locusta migratoria. Molecular mass determination by mass spectrometry.</title>
        <authorList>
            <person name="Hietter H."/>
            <person name="Luu B."/>
            <person name="Goltzene F."/>
            <person name="Zachary D."/>
            <person name="Hoffmann J.A."/>
            <person name="van Dorsselaer A."/>
        </authorList>
    </citation>
    <scope>PROTEIN SEQUENCE OF 34-61</scope>
</reference>
<keyword id="KW-0027">Amidation</keyword>
<keyword id="KW-0165">Cleavage on pair of basic residues</keyword>
<keyword id="KW-0903">Direct protein sequencing</keyword>
<keyword id="KW-1015">Disulfide bond</keyword>
<keyword id="KW-0286">Flight</keyword>
<keyword id="KW-0372">Hormone</keyword>
<keyword id="KW-0527">Neuropeptide</keyword>
<keyword id="KW-0873">Pyrrolidone carboxylic acid</keyword>
<keyword id="KW-0964">Secreted</keyword>
<keyword id="KW-0732">Signal</keyword>
<name>AKH2_LOCMI</name>
<evidence type="ECO:0000269" key="1">
    <source>
    </source>
</evidence>
<evidence type="ECO:0000269" key="2">
    <source>
    </source>
</evidence>
<evidence type="ECO:0000305" key="3"/>
<proteinExistence type="evidence at protein level"/>
<organism>
    <name type="scientific">Locusta migratoria</name>
    <name type="common">Migratory locust</name>
    <dbReference type="NCBI Taxonomy" id="7004"/>
    <lineage>
        <taxon>Eukaryota</taxon>
        <taxon>Metazoa</taxon>
        <taxon>Ecdysozoa</taxon>
        <taxon>Arthropoda</taxon>
        <taxon>Hexapoda</taxon>
        <taxon>Insecta</taxon>
        <taxon>Pterygota</taxon>
        <taxon>Neoptera</taxon>
        <taxon>Polyneoptera</taxon>
        <taxon>Orthoptera</taxon>
        <taxon>Caelifera</taxon>
        <taxon>Acrididea</taxon>
        <taxon>Acridomorpha</taxon>
        <taxon>Acridoidea</taxon>
        <taxon>Acrididae</taxon>
        <taxon>Oedipodinae</taxon>
        <taxon>Locusta</taxon>
    </lineage>
</organism>
<sequence length="61" mass="6588">MTQSCTLTLVLVVAVLAALATAQLNFSAGWGRRYADPNADPMAFLYRLIQIEARKLAGCSD</sequence>